<protein>
    <recommendedName>
        <fullName>HTH-type transcriptional activator AllS</fullName>
    </recommendedName>
</protein>
<feature type="chain" id="PRO_0000312810" description="HTH-type transcriptional activator AllS">
    <location>
        <begin position="1"/>
        <end position="270"/>
    </location>
</feature>
<feature type="domain" description="HTH lysR-type" evidence="2">
    <location>
        <begin position="4"/>
        <end position="61"/>
    </location>
</feature>
<feature type="DNA-binding region" description="H-T-H motif" evidence="2">
    <location>
        <begin position="21"/>
        <end position="40"/>
    </location>
</feature>
<comment type="function">
    <text evidence="1">Positive regulator essential for the expression of allD operon. Binds to the allD promoter (By similarity).</text>
</comment>
<comment type="similarity">
    <text evidence="3">Belongs to the LysR transcriptional regulatory family.</text>
</comment>
<name>ALLS_KLEPN</name>
<keyword id="KW-0010">Activator</keyword>
<keyword id="KW-0238">DNA-binding</keyword>
<keyword id="KW-0804">Transcription</keyword>
<keyword id="KW-0805">Transcription regulation</keyword>
<organism>
    <name type="scientific">Klebsiella pneumoniae</name>
    <dbReference type="NCBI Taxonomy" id="573"/>
    <lineage>
        <taxon>Bacteria</taxon>
        <taxon>Pseudomonadati</taxon>
        <taxon>Pseudomonadota</taxon>
        <taxon>Gammaproteobacteria</taxon>
        <taxon>Enterobacterales</taxon>
        <taxon>Enterobacteriaceae</taxon>
        <taxon>Klebsiella/Raoultella group</taxon>
        <taxon>Klebsiella</taxon>
        <taxon>Klebsiella pneumoniae complex</taxon>
    </lineage>
</organism>
<dbReference type="EMBL" id="AB115590">
    <property type="protein sequence ID" value="BAD14988.1"/>
    <property type="molecule type" value="Genomic_DNA"/>
</dbReference>
<dbReference type="SMR" id="Q765S2"/>
<dbReference type="GO" id="GO:0003677">
    <property type="term" value="F:DNA binding"/>
    <property type="evidence" value="ECO:0007669"/>
    <property type="project" value="UniProtKB-KW"/>
</dbReference>
<dbReference type="GO" id="GO:0003700">
    <property type="term" value="F:DNA-binding transcription factor activity"/>
    <property type="evidence" value="ECO:0007669"/>
    <property type="project" value="InterPro"/>
</dbReference>
<dbReference type="FunFam" id="1.10.10.10:FF:000001">
    <property type="entry name" value="LysR family transcriptional regulator"/>
    <property type="match status" value="1"/>
</dbReference>
<dbReference type="Gene3D" id="3.40.190.290">
    <property type="match status" value="1"/>
</dbReference>
<dbReference type="Gene3D" id="1.10.10.10">
    <property type="entry name" value="Winged helix-like DNA-binding domain superfamily/Winged helix DNA-binding domain"/>
    <property type="match status" value="1"/>
</dbReference>
<dbReference type="InterPro" id="IPR050176">
    <property type="entry name" value="LTTR"/>
</dbReference>
<dbReference type="InterPro" id="IPR005119">
    <property type="entry name" value="LysR_subst-bd"/>
</dbReference>
<dbReference type="InterPro" id="IPR000847">
    <property type="entry name" value="Tscrpt_reg_HTH_LysR"/>
</dbReference>
<dbReference type="InterPro" id="IPR036388">
    <property type="entry name" value="WH-like_DNA-bd_sf"/>
</dbReference>
<dbReference type="InterPro" id="IPR036390">
    <property type="entry name" value="WH_DNA-bd_sf"/>
</dbReference>
<dbReference type="NCBIfam" id="NF007501">
    <property type="entry name" value="PRK10094.1"/>
    <property type="match status" value="1"/>
</dbReference>
<dbReference type="PANTHER" id="PTHR30579:SF0">
    <property type="entry name" value="HTH-TYPE TRANSCRIPTIONAL ACTIVATOR ALLS"/>
    <property type="match status" value="1"/>
</dbReference>
<dbReference type="PANTHER" id="PTHR30579">
    <property type="entry name" value="TRANSCRIPTIONAL REGULATOR"/>
    <property type="match status" value="1"/>
</dbReference>
<dbReference type="Pfam" id="PF00126">
    <property type="entry name" value="HTH_1"/>
    <property type="match status" value="1"/>
</dbReference>
<dbReference type="Pfam" id="PF03466">
    <property type="entry name" value="LysR_substrate"/>
    <property type="match status" value="1"/>
</dbReference>
<dbReference type="SUPFAM" id="SSF53850">
    <property type="entry name" value="Periplasmic binding protein-like II"/>
    <property type="match status" value="1"/>
</dbReference>
<dbReference type="SUPFAM" id="SSF46785">
    <property type="entry name" value="Winged helix' DNA-binding domain"/>
    <property type="match status" value="1"/>
</dbReference>
<dbReference type="PROSITE" id="PS50931">
    <property type="entry name" value="HTH_LYSR"/>
    <property type="match status" value="1"/>
</dbReference>
<sequence length="270" mass="30334">MAMLDPETLRTFVSVAETGSFSRAAEKLYKTTATISYRIKLLEDNTGVALFSRTTRSVLLTPAGMHLLAQAREWLGWIDSMPGELQQINDGVERQVNIVVNNLMYDPQAIARLLAWLTQRYPFTQFHFSRQIYMGVWDTLLHDDFSLAIGVTGTEPLAENMAVYPLGEVTWLFVMSPHHPLSQQTDPLSEAQLRRYPAVNIEDSARRLTKRVAWRLPGQKEIVVPDIETKVAAHLAGVGIGFLPEPLCLPLIAQGKLIADTFRPCVPLRH</sequence>
<gene>
    <name type="primary">allS</name>
</gene>
<reference key="1">
    <citation type="journal article" date="2004" name="Infect. Immun.">
        <title>Isolation of a chromosomal region of Klebsiella pneumoniae associated with allantoin metabolism and liver infection.</title>
        <authorList>
            <person name="Chou H.-C."/>
            <person name="Lee C.-Z."/>
            <person name="Ma L.-C."/>
            <person name="Fang C.-T."/>
            <person name="Chang S.-C."/>
            <person name="Wang J.-T."/>
        </authorList>
    </citation>
    <scope>NUCLEOTIDE SEQUENCE [GENOMIC DNA]</scope>
</reference>
<proteinExistence type="inferred from homology"/>
<accession>Q765S2</accession>
<evidence type="ECO:0000250" key="1"/>
<evidence type="ECO:0000255" key="2">
    <source>
        <dbReference type="PROSITE-ProRule" id="PRU00253"/>
    </source>
</evidence>
<evidence type="ECO:0000305" key="3"/>